<evidence type="ECO:0000250" key="1">
    <source>
        <dbReference type="UniProtKB" id="Q7KU86"/>
    </source>
</evidence>
<evidence type="ECO:0000255" key="2">
    <source>
        <dbReference type="HAMAP-Rule" id="MF_03048"/>
    </source>
</evidence>
<keyword id="KW-0963">Cytoplasm</keyword>
<keyword id="KW-1017">Isopeptide bond</keyword>
<keyword id="KW-1185">Reference proteome</keyword>
<keyword id="KW-0819">tRNA processing</keyword>
<keyword id="KW-0833">Ubl conjugation pathway</keyword>
<protein>
    <recommendedName>
        <fullName evidence="2">Ubiquitin-related modifier 1 homolog</fullName>
    </recommendedName>
</protein>
<sequence length="100" mass="11175">MANDLKLILELSAGAELLFGNIKRRQLSLDGSQKWTIGSLLKWMHANILTRSPELFIQGDTVRPGILVLVNDTDWELLGGLDYELQQNDNILFISTLHGG</sequence>
<name>URM1_DROWI</name>
<dbReference type="EMBL" id="CH963847">
    <property type="protein sequence ID" value="EDW73161.1"/>
    <property type="molecule type" value="Genomic_DNA"/>
</dbReference>
<dbReference type="SMR" id="B4MLV0"/>
<dbReference type="STRING" id="7260.B4MLV0"/>
<dbReference type="EnsemblMetazoa" id="FBtr0247447">
    <property type="protein sequence ID" value="FBpp0245939"/>
    <property type="gene ID" value="FBgn0218796"/>
</dbReference>
<dbReference type="EnsemblMetazoa" id="XM_002062139.4">
    <property type="protein sequence ID" value="XP_002062175.1"/>
    <property type="gene ID" value="LOC6639146"/>
</dbReference>
<dbReference type="GeneID" id="6639146"/>
<dbReference type="KEGG" id="dwi:6639146"/>
<dbReference type="CTD" id="81605"/>
<dbReference type="eggNOG" id="KOG4146">
    <property type="taxonomic scope" value="Eukaryota"/>
</dbReference>
<dbReference type="HOGENOM" id="CLU_148208_0_1_1"/>
<dbReference type="OMA" id="IHFMAEK"/>
<dbReference type="OrthoDB" id="10248987at2759"/>
<dbReference type="PhylomeDB" id="B4MLV0"/>
<dbReference type="UniPathway" id="UPA00988"/>
<dbReference type="Proteomes" id="UP000007798">
    <property type="component" value="Unassembled WGS sequence"/>
</dbReference>
<dbReference type="GO" id="GO:0005829">
    <property type="term" value="C:cytosol"/>
    <property type="evidence" value="ECO:0007669"/>
    <property type="project" value="UniProtKB-UniRule"/>
</dbReference>
<dbReference type="GO" id="GO:0032447">
    <property type="term" value="P:protein urmylation"/>
    <property type="evidence" value="ECO:0007669"/>
    <property type="project" value="UniProtKB-UniRule"/>
</dbReference>
<dbReference type="GO" id="GO:0034227">
    <property type="term" value="P:tRNA thio-modification"/>
    <property type="evidence" value="ECO:0007669"/>
    <property type="project" value="UniProtKB-UniRule"/>
</dbReference>
<dbReference type="GO" id="GO:0002098">
    <property type="term" value="P:tRNA wobble uridine modification"/>
    <property type="evidence" value="ECO:0007669"/>
    <property type="project" value="UniProtKB-UniRule"/>
</dbReference>
<dbReference type="CDD" id="cd01764">
    <property type="entry name" value="Ubl_Urm1"/>
    <property type="match status" value="1"/>
</dbReference>
<dbReference type="FunFam" id="3.10.20.30:FF:000021">
    <property type="entry name" value="Ubiquitin-related modifier 1"/>
    <property type="match status" value="1"/>
</dbReference>
<dbReference type="Gene3D" id="3.10.20.30">
    <property type="match status" value="1"/>
</dbReference>
<dbReference type="HAMAP" id="MF_03048">
    <property type="entry name" value="Urm1"/>
    <property type="match status" value="1"/>
</dbReference>
<dbReference type="InterPro" id="IPR012675">
    <property type="entry name" value="Beta-grasp_dom_sf"/>
</dbReference>
<dbReference type="InterPro" id="IPR016155">
    <property type="entry name" value="Mopterin_synth/thiamin_S_b"/>
</dbReference>
<dbReference type="InterPro" id="IPR015221">
    <property type="entry name" value="Urm1"/>
</dbReference>
<dbReference type="PANTHER" id="PTHR14986">
    <property type="entry name" value="RURM1 PROTEIN"/>
    <property type="match status" value="1"/>
</dbReference>
<dbReference type="Pfam" id="PF09138">
    <property type="entry name" value="Urm1"/>
    <property type="match status" value="1"/>
</dbReference>
<dbReference type="PIRSF" id="PIRSF037379">
    <property type="entry name" value="Ubiquitin-related_modifier_1"/>
    <property type="match status" value="1"/>
</dbReference>
<dbReference type="SUPFAM" id="SSF54285">
    <property type="entry name" value="MoaD/ThiS"/>
    <property type="match status" value="1"/>
</dbReference>
<proteinExistence type="inferred from homology"/>
<comment type="function">
    <text evidence="2">Acts as a sulfur carrier required for 2-thiolation of mcm(5)S(2)U at tRNA wobble positions of cytosolic tRNA(Lys), tRNA(Glu) and tRNA(Gln). Serves as sulfur donor in tRNA 2-thiolation reaction by being thiocarboxylated (-COSH) at its C-terminus by MOCS3. The sulfur is then transferred to tRNA to form 2-thiolation of mcm(5)S(2)U. Also acts as a ubiquitin-like protein (UBL) that is covalently conjugated via an isopeptide bond to lysine residues of target proteins such as Prx2/Jafrac1, Ciao1, Eip71CD and GILT1. The thiocarboxylated form serves as substrate for conjugation and oxidative stress specifically induces the formation of UBL-protein conjugates.</text>
</comment>
<comment type="pathway">
    <text evidence="2">tRNA modification; 5-methoxycarbonylmethyl-2-thiouridine-tRNA biosynthesis.</text>
</comment>
<comment type="subunit">
    <text evidence="1">Interacts with cer.</text>
</comment>
<comment type="subcellular location">
    <subcellularLocation>
        <location evidence="2">Cytoplasm</location>
    </subcellularLocation>
</comment>
<comment type="PTM">
    <text evidence="2">C-terminal thiocarboxylation occurs in 2 steps, it is first acyl-adenylated (-COAMP) via the hesA/moeB/thiF part of the MOCS3 homolog, then thiocarboxylated (-COSH) via the rhodanese domain of the MOCS3 homolog.</text>
</comment>
<comment type="similarity">
    <text evidence="2">Belongs to the URM1 family.</text>
</comment>
<feature type="chain" id="PRO_0000367865" description="Ubiquitin-related modifier 1 homolog">
    <location>
        <begin position="1"/>
        <end position="100"/>
    </location>
</feature>
<feature type="modified residue" description="1-thioglycine" evidence="2">
    <location>
        <position position="100"/>
    </location>
</feature>
<feature type="cross-link" description="Glycyl lysine isopeptide (Gly-Lys) (interchain with K-? in acceptor proteins)" evidence="2">
    <location>
        <position position="100"/>
    </location>
</feature>
<accession>B4MLV0</accession>
<reference key="1">
    <citation type="journal article" date="2007" name="Nature">
        <title>Evolution of genes and genomes on the Drosophila phylogeny.</title>
        <authorList>
            <consortium name="Drosophila 12 genomes consortium"/>
        </authorList>
    </citation>
    <scope>NUCLEOTIDE SEQUENCE [LARGE SCALE GENOMIC DNA]</scope>
    <source>
        <strain>Tucson 14030-0811.24</strain>
    </source>
</reference>
<gene>
    <name evidence="1" type="primary">Urm1</name>
    <name type="ORF">GK16796</name>
</gene>
<organism>
    <name type="scientific">Drosophila willistoni</name>
    <name type="common">Fruit fly</name>
    <dbReference type="NCBI Taxonomy" id="7260"/>
    <lineage>
        <taxon>Eukaryota</taxon>
        <taxon>Metazoa</taxon>
        <taxon>Ecdysozoa</taxon>
        <taxon>Arthropoda</taxon>
        <taxon>Hexapoda</taxon>
        <taxon>Insecta</taxon>
        <taxon>Pterygota</taxon>
        <taxon>Neoptera</taxon>
        <taxon>Endopterygota</taxon>
        <taxon>Diptera</taxon>
        <taxon>Brachycera</taxon>
        <taxon>Muscomorpha</taxon>
        <taxon>Ephydroidea</taxon>
        <taxon>Drosophilidae</taxon>
        <taxon>Drosophila</taxon>
        <taxon>Sophophora</taxon>
    </lineage>
</organism>